<organism>
    <name type="scientific">Mycobacterium tuberculosis (strain CDC 1551 / Oshkosh)</name>
    <dbReference type="NCBI Taxonomy" id="83331"/>
    <lineage>
        <taxon>Bacteria</taxon>
        <taxon>Bacillati</taxon>
        <taxon>Actinomycetota</taxon>
        <taxon>Actinomycetes</taxon>
        <taxon>Mycobacteriales</taxon>
        <taxon>Mycobacteriaceae</taxon>
        <taxon>Mycobacterium</taxon>
        <taxon>Mycobacterium tuberculosis complex</taxon>
    </lineage>
</organism>
<gene>
    <name evidence="1" type="primary">espL</name>
    <name type="ordered locus">MT3995</name>
</gene>
<dbReference type="EMBL" id="AE000516">
    <property type="protein sequence ID" value="AAK48363.1"/>
    <property type="status" value="ALT_INIT"/>
    <property type="molecule type" value="Genomic_DNA"/>
</dbReference>
<dbReference type="PIR" id="F70803">
    <property type="entry name" value="F70803"/>
</dbReference>
<dbReference type="RefSeq" id="WP_003399988.1">
    <property type="nucleotide sequence ID" value="NZ_KK341228.1"/>
</dbReference>
<dbReference type="SMR" id="P9WJB8"/>
<dbReference type="GeneID" id="45427883"/>
<dbReference type="KEGG" id="mtc:MT3995"/>
<dbReference type="PATRIC" id="fig|83331.31.peg.4299"/>
<dbReference type="HOGENOM" id="CLU_169626_0_0_11"/>
<dbReference type="Proteomes" id="UP000001020">
    <property type="component" value="Chromosome"/>
</dbReference>
<dbReference type="GO" id="GO:0003677">
    <property type="term" value="F:DNA binding"/>
    <property type="evidence" value="ECO:0007669"/>
    <property type="project" value="InterPro"/>
</dbReference>
<dbReference type="Gene3D" id="3.30.1310.10">
    <property type="entry name" value="Nucleoid-associated protein YbaB-like domain"/>
    <property type="match status" value="1"/>
</dbReference>
<dbReference type="InterPro" id="IPR036894">
    <property type="entry name" value="YbaB-like_sf"/>
</dbReference>
<dbReference type="InterPro" id="IPR004401">
    <property type="entry name" value="YbaB/EbfC"/>
</dbReference>
<dbReference type="Pfam" id="PF02575">
    <property type="entry name" value="YbaB_DNA_bd"/>
    <property type="match status" value="1"/>
</dbReference>
<dbReference type="SUPFAM" id="SSF82607">
    <property type="entry name" value="YbaB-like"/>
    <property type="match status" value="1"/>
</dbReference>
<reference key="1">
    <citation type="journal article" date="2002" name="J. Bacteriol.">
        <title>Whole-genome comparison of Mycobacterium tuberculosis clinical and laboratory strains.</title>
        <authorList>
            <person name="Fleischmann R.D."/>
            <person name="Alland D."/>
            <person name="Eisen J.A."/>
            <person name="Carpenter L."/>
            <person name="White O."/>
            <person name="Peterson J.D."/>
            <person name="DeBoy R.T."/>
            <person name="Dodson R.J."/>
            <person name="Gwinn M.L."/>
            <person name="Haft D.H."/>
            <person name="Hickey E.K."/>
            <person name="Kolonay J.F."/>
            <person name="Nelson W.C."/>
            <person name="Umayam L.A."/>
            <person name="Ermolaeva M.D."/>
            <person name="Salzberg S.L."/>
            <person name="Delcher A."/>
            <person name="Utterback T.R."/>
            <person name="Weidman J.F."/>
            <person name="Khouri H.M."/>
            <person name="Gill J."/>
            <person name="Mikula A."/>
            <person name="Bishai W."/>
            <person name="Jacobs W.R. Jr."/>
            <person name="Venter J.C."/>
            <person name="Fraser C.M."/>
        </authorList>
    </citation>
    <scope>NUCLEOTIDE SEQUENCE [LARGE SCALE GENOMIC DNA]</scope>
    <source>
        <strain>CDC 1551 / Oshkosh</strain>
    </source>
</reference>
<proteinExistence type="predicted"/>
<keyword id="KW-1185">Reference proteome</keyword>
<feature type="chain" id="PRO_0000427857" description="ESX-1 secretion-associated protein EspL">
    <location>
        <begin position="1"/>
        <end position="115"/>
    </location>
</feature>
<protein>
    <recommendedName>
        <fullName evidence="1">ESX-1 secretion-associated protein EspL</fullName>
    </recommendedName>
</protein>
<accession>P9WJB8</accession>
<accession>L0TE21</accession>
<accession>O69744</accession>
<accession>Q7D4P0</accession>
<evidence type="ECO:0000250" key="1">
    <source>
        <dbReference type="UniProtKB" id="P9WJB9"/>
    </source>
</evidence>
<evidence type="ECO:0000305" key="2"/>
<comment type="sequence caution" evidence="2">
    <conflict type="erroneous initiation">
        <sequence resource="EMBL-CDS" id="AAK48363"/>
    </conflict>
    <text>Truncated N-terminus.</text>
</comment>
<sequence length="115" mass="12200">MSMDELDPHVARALTLAARFQSALDGTLNQMNNGSFRATDEAETVEVTINGHQWLTGLRIEDGLLKKLGAEAVAQRVNEALHNAQAAASAYNDAAGEQLTAALSAMSRAMNEGMA</sequence>
<name>ESPL_MYCTO</name>